<gene>
    <name evidence="1" type="primary">pth</name>
    <name type="ordered locus">ACP_2067</name>
</gene>
<sequence length="198" mass="21261">MFLVVGLGNPGIEYQFTPHNAGFLAVDAIAAEHNAVVSNRRCQALTGKIQLGGREVILAKPETYMNLSGVAVSALVRELNADPVRDLLVLYDELDLPIGSIRVRERGSPASHNGARSICSALGTADWPRVRIGVGPSGEDDLFRKGKNYLLTPMRKADLATLDGALERTARAVETVVTRGIGVAMNEFNRRENNGPAA</sequence>
<name>PTH_ACIC5</name>
<comment type="function">
    <text evidence="1">Hydrolyzes ribosome-free peptidyl-tRNAs (with 1 or more amino acids incorporated), which drop off the ribosome during protein synthesis, or as a result of ribosome stalling.</text>
</comment>
<comment type="function">
    <text evidence="1">Catalyzes the release of premature peptidyl moieties from peptidyl-tRNA molecules trapped in stalled 50S ribosomal subunits, and thus maintains levels of free tRNAs and 50S ribosomes.</text>
</comment>
<comment type="catalytic activity">
    <reaction evidence="1">
        <text>an N-acyl-L-alpha-aminoacyl-tRNA + H2O = an N-acyl-L-amino acid + a tRNA + H(+)</text>
        <dbReference type="Rhea" id="RHEA:54448"/>
        <dbReference type="Rhea" id="RHEA-COMP:10123"/>
        <dbReference type="Rhea" id="RHEA-COMP:13883"/>
        <dbReference type="ChEBI" id="CHEBI:15377"/>
        <dbReference type="ChEBI" id="CHEBI:15378"/>
        <dbReference type="ChEBI" id="CHEBI:59874"/>
        <dbReference type="ChEBI" id="CHEBI:78442"/>
        <dbReference type="ChEBI" id="CHEBI:138191"/>
        <dbReference type="EC" id="3.1.1.29"/>
    </reaction>
</comment>
<comment type="subunit">
    <text evidence="1">Monomer.</text>
</comment>
<comment type="subcellular location">
    <subcellularLocation>
        <location evidence="1">Cytoplasm</location>
    </subcellularLocation>
</comment>
<comment type="similarity">
    <text evidence="1">Belongs to the PTH family.</text>
</comment>
<accession>C1F905</accession>
<proteinExistence type="inferred from homology"/>
<organism>
    <name type="scientific">Acidobacterium capsulatum (strain ATCC 51196 / DSM 11244 / BCRC 80197 / JCM 7670 / NBRC 15755 / NCIMB 13165 / 161)</name>
    <dbReference type="NCBI Taxonomy" id="240015"/>
    <lineage>
        <taxon>Bacteria</taxon>
        <taxon>Pseudomonadati</taxon>
        <taxon>Acidobacteriota</taxon>
        <taxon>Terriglobia</taxon>
        <taxon>Terriglobales</taxon>
        <taxon>Acidobacteriaceae</taxon>
        <taxon>Acidobacterium</taxon>
    </lineage>
</organism>
<feature type="chain" id="PRO_1000192949" description="Peptidyl-tRNA hydrolase">
    <location>
        <begin position="1"/>
        <end position="198"/>
    </location>
</feature>
<feature type="active site" description="Proton acceptor" evidence="1">
    <location>
        <position position="19"/>
    </location>
</feature>
<feature type="binding site" evidence="1">
    <location>
        <position position="14"/>
    </location>
    <ligand>
        <name>tRNA</name>
        <dbReference type="ChEBI" id="CHEBI:17843"/>
    </ligand>
</feature>
<feature type="binding site" evidence="1">
    <location>
        <position position="64"/>
    </location>
    <ligand>
        <name>tRNA</name>
        <dbReference type="ChEBI" id="CHEBI:17843"/>
    </ligand>
</feature>
<feature type="binding site" evidence="1">
    <location>
        <position position="66"/>
    </location>
    <ligand>
        <name>tRNA</name>
        <dbReference type="ChEBI" id="CHEBI:17843"/>
    </ligand>
</feature>
<feature type="binding site" evidence="1">
    <location>
        <position position="113"/>
    </location>
    <ligand>
        <name>tRNA</name>
        <dbReference type="ChEBI" id="CHEBI:17843"/>
    </ligand>
</feature>
<feature type="site" description="Discriminates between blocked and unblocked aminoacyl-tRNA" evidence="1">
    <location>
        <position position="9"/>
    </location>
</feature>
<feature type="site" description="Stabilizes the basic form of H active site to accept a proton" evidence="1">
    <location>
        <position position="92"/>
    </location>
</feature>
<keyword id="KW-0963">Cytoplasm</keyword>
<keyword id="KW-0378">Hydrolase</keyword>
<keyword id="KW-1185">Reference proteome</keyword>
<keyword id="KW-0694">RNA-binding</keyword>
<keyword id="KW-0820">tRNA-binding</keyword>
<protein>
    <recommendedName>
        <fullName evidence="1">Peptidyl-tRNA hydrolase</fullName>
        <shortName evidence="1">Pth</shortName>
        <ecNumber evidence="1">3.1.1.29</ecNumber>
    </recommendedName>
</protein>
<dbReference type="EC" id="3.1.1.29" evidence="1"/>
<dbReference type="EMBL" id="CP001472">
    <property type="protein sequence ID" value="ACO33219.1"/>
    <property type="molecule type" value="Genomic_DNA"/>
</dbReference>
<dbReference type="RefSeq" id="WP_015897169.1">
    <property type="nucleotide sequence ID" value="NC_012483.1"/>
</dbReference>
<dbReference type="SMR" id="C1F905"/>
<dbReference type="FunCoup" id="C1F905">
    <property type="interactions" value="376"/>
</dbReference>
<dbReference type="STRING" id="240015.ACP_2067"/>
<dbReference type="KEGG" id="aca:ACP_2067"/>
<dbReference type="eggNOG" id="COG0193">
    <property type="taxonomic scope" value="Bacteria"/>
</dbReference>
<dbReference type="HOGENOM" id="CLU_062456_4_1_0"/>
<dbReference type="InParanoid" id="C1F905"/>
<dbReference type="OrthoDB" id="9800507at2"/>
<dbReference type="Proteomes" id="UP000002207">
    <property type="component" value="Chromosome"/>
</dbReference>
<dbReference type="GO" id="GO:0005737">
    <property type="term" value="C:cytoplasm"/>
    <property type="evidence" value="ECO:0007669"/>
    <property type="project" value="UniProtKB-SubCell"/>
</dbReference>
<dbReference type="GO" id="GO:0004045">
    <property type="term" value="F:peptidyl-tRNA hydrolase activity"/>
    <property type="evidence" value="ECO:0007669"/>
    <property type="project" value="UniProtKB-UniRule"/>
</dbReference>
<dbReference type="GO" id="GO:0000049">
    <property type="term" value="F:tRNA binding"/>
    <property type="evidence" value="ECO:0007669"/>
    <property type="project" value="UniProtKB-UniRule"/>
</dbReference>
<dbReference type="GO" id="GO:0006515">
    <property type="term" value="P:protein quality control for misfolded or incompletely synthesized proteins"/>
    <property type="evidence" value="ECO:0007669"/>
    <property type="project" value="UniProtKB-UniRule"/>
</dbReference>
<dbReference type="GO" id="GO:0072344">
    <property type="term" value="P:rescue of stalled ribosome"/>
    <property type="evidence" value="ECO:0007669"/>
    <property type="project" value="UniProtKB-UniRule"/>
</dbReference>
<dbReference type="CDD" id="cd00462">
    <property type="entry name" value="PTH"/>
    <property type="match status" value="1"/>
</dbReference>
<dbReference type="Gene3D" id="3.40.50.1470">
    <property type="entry name" value="Peptidyl-tRNA hydrolase"/>
    <property type="match status" value="1"/>
</dbReference>
<dbReference type="HAMAP" id="MF_00083">
    <property type="entry name" value="Pept_tRNA_hydro_bact"/>
    <property type="match status" value="1"/>
</dbReference>
<dbReference type="InterPro" id="IPR001328">
    <property type="entry name" value="Pept_tRNA_hydro"/>
</dbReference>
<dbReference type="InterPro" id="IPR036416">
    <property type="entry name" value="Pept_tRNA_hydro_sf"/>
</dbReference>
<dbReference type="NCBIfam" id="TIGR00447">
    <property type="entry name" value="pth"/>
    <property type="match status" value="1"/>
</dbReference>
<dbReference type="PANTHER" id="PTHR17224">
    <property type="entry name" value="PEPTIDYL-TRNA HYDROLASE"/>
    <property type="match status" value="1"/>
</dbReference>
<dbReference type="PANTHER" id="PTHR17224:SF1">
    <property type="entry name" value="PEPTIDYL-TRNA HYDROLASE"/>
    <property type="match status" value="1"/>
</dbReference>
<dbReference type="Pfam" id="PF01195">
    <property type="entry name" value="Pept_tRNA_hydro"/>
    <property type="match status" value="1"/>
</dbReference>
<dbReference type="SUPFAM" id="SSF53178">
    <property type="entry name" value="Peptidyl-tRNA hydrolase-like"/>
    <property type="match status" value="1"/>
</dbReference>
<reference key="1">
    <citation type="journal article" date="2009" name="Appl. Environ. Microbiol.">
        <title>Three genomes from the phylum Acidobacteria provide insight into the lifestyles of these microorganisms in soils.</title>
        <authorList>
            <person name="Ward N.L."/>
            <person name="Challacombe J.F."/>
            <person name="Janssen P.H."/>
            <person name="Henrissat B."/>
            <person name="Coutinho P.M."/>
            <person name="Wu M."/>
            <person name="Xie G."/>
            <person name="Haft D.H."/>
            <person name="Sait M."/>
            <person name="Badger J."/>
            <person name="Barabote R.D."/>
            <person name="Bradley B."/>
            <person name="Brettin T.S."/>
            <person name="Brinkac L.M."/>
            <person name="Bruce D."/>
            <person name="Creasy T."/>
            <person name="Daugherty S.C."/>
            <person name="Davidsen T.M."/>
            <person name="DeBoy R.T."/>
            <person name="Detter J.C."/>
            <person name="Dodson R.J."/>
            <person name="Durkin A.S."/>
            <person name="Ganapathy A."/>
            <person name="Gwinn-Giglio M."/>
            <person name="Han C.S."/>
            <person name="Khouri H."/>
            <person name="Kiss H."/>
            <person name="Kothari S.P."/>
            <person name="Madupu R."/>
            <person name="Nelson K.E."/>
            <person name="Nelson W.C."/>
            <person name="Paulsen I."/>
            <person name="Penn K."/>
            <person name="Ren Q."/>
            <person name="Rosovitz M.J."/>
            <person name="Selengut J.D."/>
            <person name="Shrivastava S."/>
            <person name="Sullivan S.A."/>
            <person name="Tapia R."/>
            <person name="Thompson L.S."/>
            <person name="Watkins K.L."/>
            <person name="Yang Q."/>
            <person name="Yu C."/>
            <person name="Zafar N."/>
            <person name="Zhou L."/>
            <person name="Kuske C.R."/>
        </authorList>
    </citation>
    <scope>NUCLEOTIDE SEQUENCE [LARGE SCALE GENOMIC DNA]</scope>
    <source>
        <strain>ATCC 51196 / DSM 11244 / BCRC 80197 / JCM 7670 / NBRC 15755 / NCIMB 13165 / 161</strain>
    </source>
</reference>
<evidence type="ECO:0000255" key="1">
    <source>
        <dbReference type="HAMAP-Rule" id="MF_00083"/>
    </source>
</evidence>